<comment type="function">
    <text evidence="1">Catalyzes the first step of the methylation pathway of phosphatidylcholine biosynthesis, the SAM-dependent methylation of phosphatidylethanolamine (PE) to phosphatidylmonomethylethanolamine (PMME).</text>
</comment>
<comment type="catalytic activity">
    <reaction evidence="1">
        <text>a 1,2-diacyl-sn-glycero-3-phosphoethanolamine + S-adenosyl-L-methionine = a 1,2-diacyl-sn-glycero-3-phospho-N-methylethanolamine + S-adenosyl-L-homocysteine + H(+)</text>
        <dbReference type="Rhea" id="RHEA:11164"/>
        <dbReference type="ChEBI" id="CHEBI:15378"/>
        <dbReference type="ChEBI" id="CHEBI:57856"/>
        <dbReference type="ChEBI" id="CHEBI:59789"/>
        <dbReference type="ChEBI" id="CHEBI:64573"/>
        <dbReference type="ChEBI" id="CHEBI:64612"/>
        <dbReference type="EC" id="2.1.1.17"/>
    </reaction>
</comment>
<comment type="pathway">
    <text evidence="1">Phospholipid metabolism; phosphatidylcholine biosynthesis.</text>
</comment>
<comment type="subcellular location">
    <subcellularLocation>
        <location evidence="1">Endoplasmic reticulum membrane</location>
        <topology evidence="1">Multi-pass membrane protein</topology>
    </subcellularLocation>
</comment>
<comment type="similarity">
    <text evidence="1">Belongs to the class VI-like SAM-binding methyltransferase superfamily. CHO2 family.</text>
</comment>
<keyword id="KW-0256">Endoplasmic reticulum</keyword>
<keyword id="KW-0444">Lipid biosynthesis</keyword>
<keyword id="KW-0443">Lipid metabolism</keyword>
<keyword id="KW-0472">Membrane</keyword>
<keyword id="KW-0489">Methyltransferase</keyword>
<keyword id="KW-0594">Phospholipid biosynthesis</keyword>
<keyword id="KW-1208">Phospholipid metabolism</keyword>
<keyword id="KW-1185">Reference proteome</keyword>
<keyword id="KW-0949">S-adenosyl-L-methionine</keyword>
<keyword id="KW-0808">Transferase</keyword>
<keyword id="KW-0812">Transmembrane</keyword>
<keyword id="KW-1133">Transmembrane helix</keyword>
<name>CHO2_ASPFU</name>
<accession>Q4WZS1</accession>
<proteinExistence type="inferred from homology"/>
<evidence type="ECO:0000255" key="1">
    <source>
        <dbReference type="HAMAP-Rule" id="MF_03217"/>
    </source>
</evidence>
<evidence type="ECO:0000256" key="2">
    <source>
        <dbReference type="SAM" id="MobiDB-lite"/>
    </source>
</evidence>
<organism>
    <name type="scientific">Aspergillus fumigatus (strain ATCC MYA-4609 / CBS 101355 / FGSC A1100 / Af293)</name>
    <name type="common">Neosartorya fumigata</name>
    <dbReference type="NCBI Taxonomy" id="330879"/>
    <lineage>
        <taxon>Eukaryota</taxon>
        <taxon>Fungi</taxon>
        <taxon>Dikarya</taxon>
        <taxon>Ascomycota</taxon>
        <taxon>Pezizomycotina</taxon>
        <taxon>Eurotiomycetes</taxon>
        <taxon>Eurotiomycetidae</taxon>
        <taxon>Eurotiales</taxon>
        <taxon>Aspergillaceae</taxon>
        <taxon>Aspergillus</taxon>
        <taxon>Aspergillus subgen. Fumigati</taxon>
    </lineage>
</organism>
<reference key="1">
    <citation type="journal article" date="2005" name="Nature">
        <title>Genomic sequence of the pathogenic and allergenic filamentous fungus Aspergillus fumigatus.</title>
        <authorList>
            <person name="Nierman W.C."/>
            <person name="Pain A."/>
            <person name="Anderson M.J."/>
            <person name="Wortman J.R."/>
            <person name="Kim H.S."/>
            <person name="Arroyo J."/>
            <person name="Berriman M."/>
            <person name="Abe K."/>
            <person name="Archer D.B."/>
            <person name="Bermejo C."/>
            <person name="Bennett J.W."/>
            <person name="Bowyer P."/>
            <person name="Chen D."/>
            <person name="Collins M."/>
            <person name="Coulsen R."/>
            <person name="Davies R."/>
            <person name="Dyer P.S."/>
            <person name="Farman M.L."/>
            <person name="Fedorova N."/>
            <person name="Fedorova N.D."/>
            <person name="Feldblyum T.V."/>
            <person name="Fischer R."/>
            <person name="Fosker N."/>
            <person name="Fraser A."/>
            <person name="Garcia J.L."/>
            <person name="Garcia M.J."/>
            <person name="Goble A."/>
            <person name="Goldman G.H."/>
            <person name="Gomi K."/>
            <person name="Griffith-Jones S."/>
            <person name="Gwilliam R."/>
            <person name="Haas B.J."/>
            <person name="Haas H."/>
            <person name="Harris D.E."/>
            <person name="Horiuchi H."/>
            <person name="Huang J."/>
            <person name="Humphray S."/>
            <person name="Jimenez J."/>
            <person name="Keller N."/>
            <person name="Khouri H."/>
            <person name="Kitamoto K."/>
            <person name="Kobayashi T."/>
            <person name="Konzack S."/>
            <person name="Kulkarni R."/>
            <person name="Kumagai T."/>
            <person name="Lafton A."/>
            <person name="Latge J.-P."/>
            <person name="Li W."/>
            <person name="Lord A."/>
            <person name="Lu C."/>
            <person name="Majoros W.H."/>
            <person name="May G.S."/>
            <person name="Miller B.L."/>
            <person name="Mohamoud Y."/>
            <person name="Molina M."/>
            <person name="Monod M."/>
            <person name="Mouyna I."/>
            <person name="Mulligan S."/>
            <person name="Murphy L.D."/>
            <person name="O'Neil S."/>
            <person name="Paulsen I."/>
            <person name="Penalva M.A."/>
            <person name="Pertea M."/>
            <person name="Price C."/>
            <person name="Pritchard B.L."/>
            <person name="Quail M.A."/>
            <person name="Rabbinowitsch E."/>
            <person name="Rawlins N."/>
            <person name="Rajandream M.A."/>
            <person name="Reichard U."/>
            <person name="Renauld H."/>
            <person name="Robson G.D."/>
            <person name="Rodriguez de Cordoba S."/>
            <person name="Rodriguez-Pena J.M."/>
            <person name="Ronning C.M."/>
            <person name="Rutter S."/>
            <person name="Salzberg S.L."/>
            <person name="Sanchez M."/>
            <person name="Sanchez-Ferrero J.C."/>
            <person name="Saunders D."/>
            <person name="Seeger K."/>
            <person name="Squares R."/>
            <person name="Squares S."/>
            <person name="Takeuchi M."/>
            <person name="Tekaia F."/>
            <person name="Turner G."/>
            <person name="Vazquez de Aldana C.R."/>
            <person name="Weidman J."/>
            <person name="White O."/>
            <person name="Woodward J.R."/>
            <person name="Yu J.-H."/>
            <person name="Fraser C.M."/>
            <person name="Galagan J.E."/>
            <person name="Asai K."/>
            <person name="Machida M."/>
            <person name="Hall N."/>
            <person name="Barrell B.G."/>
            <person name="Denning D.W."/>
        </authorList>
    </citation>
    <scope>NUCLEOTIDE SEQUENCE [LARGE SCALE GENOMIC DNA]</scope>
    <source>
        <strain>ATCC MYA-4609 / CBS 101355 / FGSC A1100 / Af293</strain>
    </source>
</reference>
<sequence length="922" mass="104205">MDRGLSTGAHQADDGLRERTVASQSSSAPGLEALTATGEGEVKDKAGKGKKTYGRTPQGKVFTVPQTHDMVSQLLSPSEPKNLSDVIVLAILAAHILLLWRLPAGVKVPVFAFIYLFWRGAYNAGIGWLLHNQSNHRTLVRWAEKTKIFVNPATGQNPHANLYKLIKRELETKIPADYSFEDAPIEYNTWLVFRRLVDLILMCDFTSYCLFAIACSQRPFDEGTLMTVLRWSAGIVLVLFNLWVKLDAHRVVKDYAWYWGDFFFLIDQELTFDGVFEMAPHPMYSVGYAGYYGISLMAASYKVLFISILAHAAQFAFLVFVENPHIEKTYNPPPPRKRTIEQENVSITPQRSDSPSAPASVDEQVPHAPSYSSGPPPSVHNLLGFRNLDLYRTIDTSSILIQFLVFALTVLTPSTPWFQFLFVANAAVWRIWYSVGIGFVLNRQSNCKAWTRHFVKYGESPQEAWNQWKGTYHISMVMCYASFIAAVWKMYSFPADWGYGLVLLRHVLGAGLIALQIWTSVSIYESLGEFGWFYGDFFFDESPKLTYDGIYRFLNNPERVLGLAGVWGAVLITSSGAVTFLALMSHILSLGFIQFVERPHMQKLYGRSLRRDAGLTKSLKRSLPPSLQQLHGSVDKIFDESFEFIEELIDTARPKLAAGVNTFVKDTSALFQKYPARVTISRIDEDLAGYDLRDYSLEIEGTDSLSPNDNDQSGREGANARMPLDRRGDLKNLVFEYGSPIKVKWTAPLNHSKKDWIGLYRVTDNTSREVTRVSSQGRWIAVNEGSYDNLTCEKGIVSSDILIPASQRKDNENRDLASGEVIFSGDKLFWTQGVFEFRYHHNGKHNVMAISRPFEIRISRFDEDEIPLMNPTSVELSLFPVVRNCLDRDPQIAPETVDEPFGGLVERDGKYAKRVVFAVHQM</sequence>
<gene>
    <name type="primary">cho2</name>
    <name type="ORF">AFUA_2G15970</name>
</gene>
<feature type="chain" id="PRO_0000405875" description="Phosphatidylethanolamine N-methyltransferase">
    <location>
        <begin position="1"/>
        <end position="922"/>
    </location>
</feature>
<feature type="topological domain" description="Lumenal" evidence="1">
    <location>
        <begin position="1"/>
        <end position="85"/>
    </location>
</feature>
<feature type="transmembrane region" description="Helical" evidence="1">
    <location>
        <begin position="86"/>
        <end position="106"/>
    </location>
</feature>
<feature type="topological domain" description="Cytoplasmic" evidence="1">
    <location>
        <begin position="107"/>
        <end position="109"/>
    </location>
</feature>
<feature type="transmembrane region" description="Helical" evidence="1">
    <location>
        <begin position="110"/>
        <end position="130"/>
    </location>
</feature>
<feature type="topological domain" description="Lumenal" evidence="1">
    <location>
        <begin position="131"/>
        <end position="195"/>
    </location>
</feature>
<feature type="transmembrane region" description="Helical" evidence="1">
    <location>
        <begin position="196"/>
        <end position="216"/>
    </location>
</feature>
<feature type="topological domain" description="Cytoplasmic" evidence="1">
    <location>
        <begin position="217"/>
        <end position="223"/>
    </location>
</feature>
<feature type="transmembrane region" description="Helical" evidence="1">
    <location>
        <begin position="224"/>
        <end position="244"/>
    </location>
</feature>
<feature type="topological domain" description="Lumenal" evidence="1">
    <location>
        <begin position="245"/>
        <end position="277"/>
    </location>
</feature>
<feature type="transmembrane region" description="Helical" evidence="1">
    <location>
        <begin position="278"/>
        <end position="298"/>
    </location>
</feature>
<feature type="topological domain" description="Cytoplasmic" evidence="1">
    <location>
        <begin position="299"/>
        <end position="300"/>
    </location>
</feature>
<feature type="transmembrane region" description="Helical" evidence="1">
    <location>
        <begin position="301"/>
        <end position="321"/>
    </location>
</feature>
<feature type="topological domain" description="Lumenal" evidence="1">
    <location>
        <begin position="322"/>
        <end position="395"/>
    </location>
</feature>
<feature type="transmembrane region" description="Helical" evidence="1">
    <location>
        <begin position="396"/>
        <end position="415"/>
    </location>
</feature>
<feature type="topological domain" description="Cytoplasmic" evidence="1">
    <location>
        <begin position="416"/>
        <end position="419"/>
    </location>
</feature>
<feature type="transmembrane region" description="Helical" evidence="1">
    <location>
        <begin position="420"/>
        <end position="442"/>
    </location>
</feature>
<feature type="topological domain" description="Lumenal" evidence="1">
    <location>
        <begin position="443"/>
        <end position="473"/>
    </location>
</feature>
<feature type="transmembrane region" description="Helical" evidence="1">
    <location>
        <begin position="474"/>
        <end position="494"/>
    </location>
</feature>
<feature type="topological domain" description="Cytoplasmic" evidence="1">
    <location>
        <begin position="495"/>
        <end position="496"/>
    </location>
</feature>
<feature type="transmembrane region" description="Helical" evidence="1">
    <location>
        <begin position="497"/>
        <end position="517"/>
    </location>
</feature>
<feature type="topological domain" description="Lumenal" evidence="1">
    <location>
        <begin position="518"/>
        <end position="562"/>
    </location>
</feature>
<feature type="transmembrane region" description="Helical" evidence="1">
    <location>
        <begin position="563"/>
        <end position="583"/>
    </location>
</feature>
<feature type="topological domain" description="Cytoplasmic" evidence="1">
    <location>
        <begin position="584"/>
        <end position="922"/>
    </location>
</feature>
<feature type="region of interest" description="Disordered" evidence="2">
    <location>
        <begin position="1"/>
        <end position="59"/>
    </location>
</feature>
<feature type="region of interest" description="Disordered" evidence="2">
    <location>
        <begin position="346"/>
        <end position="375"/>
    </location>
</feature>
<feature type="region of interest" description="Disordered" evidence="2">
    <location>
        <begin position="701"/>
        <end position="722"/>
    </location>
</feature>
<feature type="compositionally biased region" description="Basic and acidic residues" evidence="2">
    <location>
        <begin position="11"/>
        <end position="20"/>
    </location>
</feature>
<feature type="compositionally biased region" description="Polar residues" evidence="2">
    <location>
        <begin position="346"/>
        <end position="357"/>
    </location>
</feature>
<protein>
    <recommendedName>
        <fullName evidence="1">Phosphatidylethanolamine N-methyltransferase</fullName>
        <shortName evidence="1">PE methyltransferase</shortName>
        <shortName evidence="1">PEAMT</shortName>
        <shortName evidence="1">PEMT</shortName>
        <ecNumber evidence="1">2.1.1.17</ecNumber>
    </recommendedName>
</protein>
<dbReference type="EC" id="2.1.1.17" evidence="1"/>
<dbReference type="EMBL" id="AAHF01000001">
    <property type="protein sequence ID" value="EAL93894.1"/>
    <property type="molecule type" value="Genomic_DNA"/>
</dbReference>
<dbReference type="RefSeq" id="XP_755932.1">
    <property type="nucleotide sequence ID" value="XM_750839.1"/>
</dbReference>
<dbReference type="FunCoup" id="Q4WZS1">
    <property type="interactions" value="67"/>
</dbReference>
<dbReference type="STRING" id="330879.Q4WZS1"/>
<dbReference type="EnsemblFungi" id="EAL93894">
    <property type="protein sequence ID" value="EAL93894"/>
    <property type="gene ID" value="AFUA_2G15970"/>
</dbReference>
<dbReference type="GeneID" id="3513106"/>
<dbReference type="KEGG" id="afm:AFUA_2G15970"/>
<dbReference type="eggNOG" id="ENOG502QRGH">
    <property type="taxonomic scope" value="Eukaryota"/>
</dbReference>
<dbReference type="HOGENOM" id="CLU_005987_0_1_1"/>
<dbReference type="InParanoid" id="Q4WZS1"/>
<dbReference type="OMA" id="RIWYSVG"/>
<dbReference type="OrthoDB" id="4583at2759"/>
<dbReference type="UniPathway" id="UPA00753"/>
<dbReference type="Proteomes" id="UP000002530">
    <property type="component" value="Chromosome 2"/>
</dbReference>
<dbReference type="GO" id="GO:0032541">
    <property type="term" value="C:cortical endoplasmic reticulum"/>
    <property type="evidence" value="ECO:0007669"/>
    <property type="project" value="EnsemblFungi"/>
</dbReference>
<dbReference type="GO" id="GO:0005789">
    <property type="term" value="C:endoplasmic reticulum membrane"/>
    <property type="evidence" value="ECO:0007669"/>
    <property type="project" value="UniProtKB-SubCell"/>
</dbReference>
<dbReference type="GO" id="GO:0097038">
    <property type="term" value="C:perinuclear endoplasmic reticulum"/>
    <property type="evidence" value="ECO:0007669"/>
    <property type="project" value="EnsemblFungi"/>
</dbReference>
<dbReference type="GO" id="GO:0004608">
    <property type="term" value="F:phosphatidylethanolamine N-methyltransferase activity"/>
    <property type="evidence" value="ECO:0000318"/>
    <property type="project" value="GO_Central"/>
</dbReference>
<dbReference type="GO" id="GO:0032259">
    <property type="term" value="P:methylation"/>
    <property type="evidence" value="ECO:0007669"/>
    <property type="project" value="UniProtKB-KW"/>
</dbReference>
<dbReference type="GO" id="GO:0006656">
    <property type="term" value="P:phosphatidylcholine biosynthetic process"/>
    <property type="evidence" value="ECO:0000318"/>
    <property type="project" value="GO_Central"/>
</dbReference>
<dbReference type="FunFam" id="2.60.40.2840:FF:000006">
    <property type="entry name" value="Phosphatidylethanolamine N-methyltransferase"/>
    <property type="match status" value="1"/>
</dbReference>
<dbReference type="Gene3D" id="2.60.40.2840">
    <property type="match status" value="1"/>
</dbReference>
<dbReference type="HAMAP" id="MF_03217">
    <property type="entry name" value="PEMT"/>
    <property type="match status" value="1"/>
</dbReference>
<dbReference type="InterPro" id="IPR007318">
    <property type="entry name" value="Phopholipid_MeTrfase"/>
</dbReference>
<dbReference type="InterPro" id="IPR016219">
    <property type="entry name" value="Phosphatid-EA_MeTrfase_fun"/>
</dbReference>
<dbReference type="PANTHER" id="PTHR32138">
    <property type="entry name" value="PHOSPHATIDYLETHANOLAMINE N-METHYLTRANSFERASE"/>
    <property type="match status" value="1"/>
</dbReference>
<dbReference type="PANTHER" id="PTHR32138:SF0">
    <property type="entry name" value="PHOSPHATIDYLETHANOLAMINE N-METHYLTRANSFERASE"/>
    <property type="match status" value="1"/>
</dbReference>
<dbReference type="Pfam" id="PF04191">
    <property type="entry name" value="PEMT"/>
    <property type="match status" value="2"/>
</dbReference>
<dbReference type="PIRSF" id="PIRSF000383">
    <property type="entry name" value="PEAMT"/>
    <property type="match status" value="1"/>
</dbReference>
<dbReference type="PROSITE" id="PS51598">
    <property type="entry name" value="SAM_CHO2"/>
    <property type="match status" value="1"/>
</dbReference>